<evidence type="ECO:0000255" key="1">
    <source>
        <dbReference type="HAMAP-Rule" id="MF_00298"/>
    </source>
</evidence>
<evidence type="ECO:0000256" key="2">
    <source>
        <dbReference type="SAM" id="MobiDB-lite"/>
    </source>
</evidence>
<feature type="chain" id="PRO_1000021923" description="RNA pyrophosphohydrolase">
    <location>
        <begin position="1"/>
        <end position="206"/>
    </location>
</feature>
<feature type="domain" description="Nudix hydrolase" evidence="1">
    <location>
        <begin position="6"/>
        <end position="150"/>
    </location>
</feature>
<feature type="region of interest" description="Disordered" evidence="2">
    <location>
        <begin position="162"/>
        <end position="206"/>
    </location>
</feature>
<feature type="short sequence motif" description="Nudix box">
    <location>
        <begin position="38"/>
        <end position="59"/>
    </location>
</feature>
<feature type="compositionally biased region" description="Basic and acidic residues" evidence="2">
    <location>
        <begin position="162"/>
        <end position="191"/>
    </location>
</feature>
<reference key="1">
    <citation type="journal article" date="2008" name="J. Bacteriol.">
        <title>The complete genome sequence of Actinobacillus pleuropneumoniae L20 (serotype 5b).</title>
        <authorList>
            <person name="Foote S.J."/>
            <person name="Bosse J.T."/>
            <person name="Bouevitch A.B."/>
            <person name="Langford P.R."/>
            <person name="Young N.M."/>
            <person name="Nash J.H.E."/>
        </authorList>
    </citation>
    <scope>NUCLEOTIDE SEQUENCE [LARGE SCALE GENOMIC DNA]</scope>
    <source>
        <strain>L20</strain>
    </source>
</reference>
<dbReference type="EC" id="3.6.1.-" evidence="1"/>
<dbReference type="EMBL" id="CP000569">
    <property type="protein sequence ID" value="ABN74977.1"/>
    <property type="molecule type" value="Genomic_DNA"/>
</dbReference>
<dbReference type="RefSeq" id="WP_011848673.1">
    <property type="nucleotide sequence ID" value="NC_009053.1"/>
</dbReference>
<dbReference type="SMR" id="A3N3J1"/>
<dbReference type="STRING" id="416269.APL_1897"/>
<dbReference type="EnsemblBacteria" id="ABN74977">
    <property type="protein sequence ID" value="ABN74977"/>
    <property type="gene ID" value="APL_1897"/>
</dbReference>
<dbReference type="KEGG" id="apl:APL_1897"/>
<dbReference type="PATRIC" id="fig|416269.6.peg.1975"/>
<dbReference type="eggNOG" id="COG0494">
    <property type="taxonomic scope" value="Bacteria"/>
</dbReference>
<dbReference type="HOGENOM" id="CLU_087195_3_2_6"/>
<dbReference type="Proteomes" id="UP000001432">
    <property type="component" value="Chromosome"/>
</dbReference>
<dbReference type="GO" id="GO:0005737">
    <property type="term" value="C:cytoplasm"/>
    <property type="evidence" value="ECO:0007669"/>
    <property type="project" value="TreeGrafter"/>
</dbReference>
<dbReference type="GO" id="GO:0034353">
    <property type="term" value="F:mRNA 5'-diphosphatase activity"/>
    <property type="evidence" value="ECO:0007669"/>
    <property type="project" value="TreeGrafter"/>
</dbReference>
<dbReference type="GO" id="GO:0006402">
    <property type="term" value="P:mRNA catabolic process"/>
    <property type="evidence" value="ECO:0007669"/>
    <property type="project" value="TreeGrafter"/>
</dbReference>
<dbReference type="CDD" id="cd03671">
    <property type="entry name" value="NUDIX_Ap4A_hydrolase_plant_like"/>
    <property type="match status" value="1"/>
</dbReference>
<dbReference type="FunFam" id="3.90.79.10:FF:000001">
    <property type="entry name" value="RNA pyrophosphohydrolase"/>
    <property type="match status" value="1"/>
</dbReference>
<dbReference type="Gene3D" id="3.90.79.10">
    <property type="entry name" value="Nucleoside Triphosphate Pyrophosphohydrolase"/>
    <property type="match status" value="1"/>
</dbReference>
<dbReference type="HAMAP" id="MF_00298">
    <property type="entry name" value="Nudix_RppH"/>
    <property type="match status" value="1"/>
</dbReference>
<dbReference type="InterPro" id="IPR020476">
    <property type="entry name" value="Nudix_hydrolase"/>
</dbReference>
<dbReference type="InterPro" id="IPR015797">
    <property type="entry name" value="NUDIX_hydrolase-like_dom_sf"/>
</dbReference>
<dbReference type="InterPro" id="IPR020084">
    <property type="entry name" value="NUDIX_hydrolase_CS"/>
</dbReference>
<dbReference type="InterPro" id="IPR000086">
    <property type="entry name" value="NUDIX_hydrolase_dom"/>
</dbReference>
<dbReference type="InterPro" id="IPR022927">
    <property type="entry name" value="RppH"/>
</dbReference>
<dbReference type="NCBIfam" id="NF001934">
    <property type="entry name" value="PRK00714.1-1"/>
    <property type="match status" value="1"/>
</dbReference>
<dbReference type="NCBIfam" id="NF001937">
    <property type="entry name" value="PRK00714.1-4"/>
    <property type="match status" value="1"/>
</dbReference>
<dbReference type="NCBIfam" id="NF001938">
    <property type="entry name" value="PRK00714.1-5"/>
    <property type="match status" value="1"/>
</dbReference>
<dbReference type="PANTHER" id="PTHR23114">
    <property type="entry name" value="M7GPPPN-MRNA HYDROLASE"/>
    <property type="match status" value="1"/>
</dbReference>
<dbReference type="PANTHER" id="PTHR23114:SF17">
    <property type="entry name" value="M7GPPPN-MRNA HYDROLASE"/>
    <property type="match status" value="1"/>
</dbReference>
<dbReference type="Pfam" id="PF00293">
    <property type="entry name" value="NUDIX"/>
    <property type="match status" value="1"/>
</dbReference>
<dbReference type="PRINTS" id="PR00502">
    <property type="entry name" value="NUDIXFAMILY"/>
</dbReference>
<dbReference type="SUPFAM" id="SSF55811">
    <property type="entry name" value="Nudix"/>
    <property type="match status" value="1"/>
</dbReference>
<dbReference type="PROSITE" id="PS51462">
    <property type="entry name" value="NUDIX"/>
    <property type="match status" value="1"/>
</dbReference>
<dbReference type="PROSITE" id="PS00893">
    <property type="entry name" value="NUDIX_BOX"/>
    <property type="match status" value="1"/>
</dbReference>
<accession>A3N3J1</accession>
<protein>
    <recommendedName>
        <fullName evidence="1">RNA pyrophosphohydrolase</fullName>
        <ecNumber evidence="1">3.6.1.-</ecNumber>
    </recommendedName>
    <alternativeName>
        <fullName evidence="1">(Di)nucleoside polyphosphate hydrolase</fullName>
    </alternativeName>
</protein>
<name>RPPH_ACTP2</name>
<sequence length="206" mass="24615">MIDFDGYRPNVGIVICNKAGQVLWAKRFGQNSWQFPQGGINEGENIETAMYRELYEEVGLTKKDVRLLWASKYWLKYKLPKRLVRSDGSQLVCIGQKQRWFLLQLLSDENLIDLKTTKSPEFDGWRWVSFWYPVRQVVSFKRDVYRKVMKEFAGVLLNESKKPETVEKPRVERTEKRDFQKRDNQKREFRKSARMWNNSHQKGKAQ</sequence>
<proteinExistence type="inferred from homology"/>
<keyword id="KW-0378">Hydrolase</keyword>
<keyword id="KW-1185">Reference proteome</keyword>
<gene>
    <name evidence="1" type="primary">rppH</name>
    <name evidence="1" type="synonym">nudH</name>
    <name type="ordered locus">APL_1897</name>
</gene>
<organism>
    <name type="scientific">Actinobacillus pleuropneumoniae serotype 5b (strain L20)</name>
    <dbReference type="NCBI Taxonomy" id="416269"/>
    <lineage>
        <taxon>Bacteria</taxon>
        <taxon>Pseudomonadati</taxon>
        <taxon>Pseudomonadota</taxon>
        <taxon>Gammaproteobacteria</taxon>
        <taxon>Pasteurellales</taxon>
        <taxon>Pasteurellaceae</taxon>
        <taxon>Actinobacillus</taxon>
    </lineage>
</organism>
<comment type="function">
    <text evidence="1">Accelerates the degradation of transcripts by removing pyrophosphate from the 5'-end of triphosphorylated RNA, leading to a more labile monophosphorylated state that can stimulate subsequent ribonuclease cleavage.</text>
</comment>
<comment type="cofactor">
    <cofactor evidence="1">
        <name>a divalent metal cation</name>
        <dbReference type="ChEBI" id="CHEBI:60240"/>
    </cofactor>
</comment>
<comment type="similarity">
    <text evidence="1">Belongs to the Nudix hydrolase family. RppH subfamily.</text>
</comment>